<evidence type="ECO:0000250" key="1"/>
<evidence type="ECO:0000305" key="2"/>
<reference key="1">
    <citation type="journal article" date="2004" name="Nature">
        <title>Genome evolution in yeasts.</title>
        <authorList>
            <person name="Dujon B."/>
            <person name="Sherman D."/>
            <person name="Fischer G."/>
            <person name="Durrens P."/>
            <person name="Casaregola S."/>
            <person name="Lafontaine I."/>
            <person name="de Montigny J."/>
            <person name="Marck C."/>
            <person name="Neuveglise C."/>
            <person name="Talla E."/>
            <person name="Goffard N."/>
            <person name="Frangeul L."/>
            <person name="Aigle M."/>
            <person name="Anthouard V."/>
            <person name="Babour A."/>
            <person name="Barbe V."/>
            <person name="Barnay S."/>
            <person name="Blanchin S."/>
            <person name="Beckerich J.-M."/>
            <person name="Beyne E."/>
            <person name="Bleykasten C."/>
            <person name="Boisrame A."/>
            <person name="Boyer J."/>
            <person name="Cattolico L."/>
            <person name="Confanioleri F."/>
            <person name="de Daruvar A."/>
            <person name="Despons L."/>
            <person name="Fabre E."/>
            <person name="Fairhead C."/>
            <person name="Ferry-Dumazet H."/>
            <person name="Groppi A."/>
            <person name="Hantraye F."/>
            <person name="Hennequin C."/>
            <person name="Jauniaux N."/>
            <person name="Joyet P."/>
            <person name="Kachouri R."/>
            <person name="Kerrest A."/>
            <person name="Koszul R."/>
            <person name="Lemaire M."/>
            <person name="Lesur I."/>
            <person name="Ma L."/>
            <person name="Muller H."/>
            <person name="Nicaud J.-M."/>
            <person name="Nikolski M."/>
            <person name="Oztas S."/>
            <person name="Ozier-Kalogeropoulos O."/>
            <person name="Pellenz S."/>
            <person name="Potier S."/>
            <person name="Richard G.-F."/>
            <person name="Straub M.-L."/>
            <person name="Suleau A."/>
            <person name="Swennen D."/>
            <person name="Tekaia F."/>
            <person name="Wesolowski-Louvel M."/>
            <person name="Westhof E."/>
            <person name="Wirth B."/>
            <person name="Zeniou-Meyer M."/>
            <person name="Zivanovic Y."/>
            <person name="Bolotin-Fukuhara M."/>
            <person name="Thierry A."/>
            <person name="Bouchier C."/>
            <person name="Caudron B."/>
            <person name="Scarpelli C."/>
            <person name="Gaillardin C."/>
            <person name="Weissenbach J."/>
            <person name="Wincker P."/>
            <person name="Souciet J.-L."/>
        </authorList>
    </citation>
    <scope>NUCLEOTIDE SEQUENCE [LARGE SCALE GENOMIC DNA]</scope>
    <source>
        <strain>CLIB 122 / E 150</strain>
    </source>
</reference>
<proteinExistence type="inferred from homology"/>
<keyword id="KW-0963">Cytoplasm</keyword>
<keyword id="KW-0378">Hydrolase</keyword>
<keyword id="KW-0479">Metal-binding</keyword>
<keyword id="KW-0482">Metalloprotease</keyword>
<keyword id="KW-0539">Nucleus</keyword>
<keyword id="KW-0645">Protease</keyword>
<keyword id="KW-1185">Reference proteome</keyword>
<comment type="function">
    <text evidence="1">Probable metalloprotease involved in proper assembly of pre-ribosomal particles during the biogenesis of the 60S ribosomal subunit. Accompanies the pre-60S particles to the cytoplasm (By similarity).</text>
</comment>
<comment type="subunit">
    <text evidence="1">Component of the nucleoplasmic and cytoplasmic pre-60S ribosomal particles.</text>
</comment>
<comment type="subcellular location">
    <subcellularLocation>
        <location evidence="1">Cytoplasm</location>
    </subcellularLocation>
    <subcellularLocation>
        <location evidence="1">Nucleus</location>
    </subcellularLocation>
</comment>
<comment type="similarity">
    <text evidence="2">Belongs to the peptidase M24 family.</text>
</comment>
<organism>
    <name type="scientific">Yarrowia lipolytica (strain CLIB 122 / E 150)</name>
    <name type="common">Yeast</name>
    <name type="synonym">Candida lipolytica</name>
    <dbReference type="NCBI Taxonomy" id="284591"/>
    <lineage>
        <taxon>Eukaryota</taxon>
        <taxon>Fungi</taxon>
        <taxon>Dikarya</taxon>
        <taxon>Ascomycota</taxon>
        <taxon>Saccharomycotina</taxon>
        <taxon>Dipodascomycetes</taxon>
        <taxon>Dipodascales</taxon>
        <taxon>Dipodascales incertae sedis</taxon>
        <taxon>Yarrowia</taxon>
    </lineage>
</organism>
<dbReference type="EC" id="3.-.-.-"/>
<dbReference type="EMBL" id="CR382129">
    <property type="protein sequence ID" value="CAG81781.1"/>
    <property type="molecule type" value="Genomic_DNA"/>
</dbReference>
<dbReference type="RefSeq" id="XP_501480.1">
    <property type="nucleotide sequence ID" value="XM_501480.1"/>
</dbReference>
<dbReference type="SMR" id="Q6CCY2"/>
<dbReference type="FunCoup" id="Q6CCY2">
    <property type="interactions" value="380"/>
</dbReference>
<dbReference type="STRING" id="284591.Q6CCY2"/>
<dbReference type="EnsemblFungi" id="CAG81781">
    <property type="protein sequence ID" value="CAG81781"/>
    <property type="gene ID" value="YALI0_C05599g"/>
</dbReference>
<dbReference type="KEGG" id="yli:2910102"/>
<dbReference type="VEuPathDB" id="FungiDB:YALI0_C05599g"/>
<dbReference type="HOGENOM" id="CLU_477525_0_0_1"/>
<dbReference type="InParanoid" id="Q6CCY2"/>
<dbReference type="OMA" id="YEQHIEE"/>
<dbReference type="OrthoDB" id="114687at4891"/>
<dbReference type="Proteomes" id="UP000001300">
    <property type="component" value="Chromosome C"/>
</dbReference>
<dbReference type="GO" id="GO:0005737">
    <property type="term" value="C:cytoplasm"/>
    <property type="evidence" value="ECO:0007669"/>
    <property type="project" value="UniProtKB-SubCell"/>
</dbReference>
<dbReference type="GO" id="GO:0005730">
    <property type="term" value="C:nucleolus"/>
    <property type="evidence" value="ECO:0007669"/>
    <property type="project" value="EnsemblFungi"/>
</dbReference>
<dbReference type="GO" id="GO:0005654">
    <property type="term" value="C:nucleoplasm"/>
    <property type="evidence" value="ECO:0007669"/>
    <property type="project" value="EnsemblFungi"/>
</dbReference>
<dbReference type="GO" id="GO:0030687">
    <property type="term" value="C:preribosome, large subunit precursor"/>
    <property type="evidence" value="ECO:0007669"/>
    <property type="project" value="EnsemblFungi"/>
</dbReference>
<dbReference type="GO" id="GO:0046872">
    <property type="term" value="F:metal ion binding"/>
    <property type="evidence" value="ECO:0007669"/>
    <property type="project" value="UniProtKB-KW"/>
</dbReference>
<dbReference type="GO" id="GO:0008237">
    <property type="term" value="F:metallopeptidase activity"/>
    <property type="evidence" value="ECO:0007669"/>
    <property type="project" value="UniProtKB-KW"/>
</dbReference>
<dbReference type="GO" id="GO:0006508">
    <property type="term" value="P:proteolysis"/>
    <property type="evidence" value="ECO:0007669"/>
    <property type="project" value="UniProtKB-KW"/>
</dbReference>
<dbReference type="GO" id="GO:0000055">
    <property type="term" value="P:ribosomal large subunit export from nucleus"/>
    <property type="evidence" value="ECO:0007669"/>
    <property type="project" value="EnsemblFungi"/>
</dbReference>
<dbReference type="Gene3D" id="3.90.230.10">
    <property type="entry name" value="Creatinase/methionine aminopeptidase superfamily"/>
    <property type="match status" value="1"/>
</dbReference>
<dbReference type="Gene3D" id="1.10.10.10">
    <property type="entry name" value="Winged helix-like DNA-binding domain superfamily/Winged helix DNA-binding domain"/>
    <property type="match status" value="1"/>
</dbReference>
<dbReference type="InterPro" id="IPR036005">
    <property type="entry name" value="Creatinase/aminopeptidase-like"/>
</dbReference>
<dbReference type="InterPro" id="IPR047113">
    <property type="entry name" value="PA2G4/ARX1"/>
</dbReference>
<dbReference type="InterPro" id="IPR036388">
    <property type="entry name" value="WH-like_DNA-bd_sf"/>
</dbReference>
<dbReference type="PANTHER" id="PTHR10804:SF102">
    <property type="entry name" value="METALLOPROTEASE ARX1-RELATED"/>
    <property type="match status" value="1"/>
</dbReference>
<dbReference type="PANTHER" id="PTHR10804">
    <property type="entry name" value="PROTEASE FAMILY M24 METHIONYL AMINOPEPTIDASE, AMINOPEPTIDASE P"/>
    <property type="match status" value="1"/>
</dbReference>
<dbReference type="SUPFAM" id="SSF55920">
    <property type="entry name" value="Creatinase/aminopeptidase"/>
    <property type="match status" value="1"/>
</dbReference>
<protein>
    <recommendedName>
        <fullName>Probable metalloprotease ARX1</fullName>
        <ecNumber>3.-.-.-</ecNumber>
    </recommendedName>
    <alternativeName>
        <fullName>Associated with ribosomal export complex protein 1</fullName>
    </alternativeName>
</protein>
<accession>Q6CCY2</accession>
<sequence length="484" mass="52671">MSLARSTALLDEKNTLTSSVTDKYRLAGKITQTCLQHIIQTVLTQYETYTVGEMCRMGDEFLERATTAVYKSVAEKGIAQPVRIEKQEFVGGVSPENGDKFQGGMLAPGDLVKISLGVYIDGYTAQVTQTEVVRHVPNTSAGETEQPLTGSPADAVCASYLASEAVIAYLAQVTDPNPGKAVGVVTGTKIRELVEKIAAAYHVKIVPGSSVRRIRRFLAGQHDIVLERDYKGVLWEVEGEEERALHAVKLAESEAKQESTEGAVCLYEQHIEEEENFTVEAGEAYQVDIQMAAAPQKGAIRLYDFQGYDESGTVINQYGRDFSVTYGLKIQASRKLLSQLEATTSVYPFKLSHVESNVAKARLGLGEILAHQILVPIPVKVAKFVPLAALYEFSKNSKARARDEASKAVPVARNSSSVLLTNDACLRLTGGQAFPPPYVHSAFELPEDVTNLLKLVGHKHGAKVKDVLPGDVDMAPAKEAKMEE</sequence>
<name>ARX1_YARLI</name>
<feature type="chain" id="PRO_0000148998" description="Probable metalloprotease ARX1">
    <location>
        <begin position="1"/>
        <end position="484"/>
    </location>
</feature>
<gene>
    <name type="primary">ARX1</name>
    <name type="ordered locus">YALI0C05599g</name>
</gene>